<protein>
    <recommendedName>
        <fullName evidence="2">Small ribosomal subunit protein uS5</fullName>
    </recommendedName>
    <alternativeName>
        <fullName>30S ribosomal protein S5</fullName>
    </alternativeName>
</protein>
<comment type="function">
    <text evidence="1">With S4 and S12 plays an important role in translational accuracy.</text>
</comment>
<comment type="function">
    <text evidence="1">Located at the back of the 30S subunit body where it stabilizes the conformation of the head with respect to the body.</text>
</comment>
<comment type="subunit">
    <text evidence="1">Part of the 30S ribosomal subunit. Contacts proteins S4 and S8 (By similarity).</text>
</comment>
<comment type="domain">
    <text>The N-terminal domain interacts with the head of the 30S subunit; the C-terminal domain interacts with the body and contacts protein S4. The interaction surface between S4 and S5 is involved in control of translational fidelity.</text>
</comment>
<comment type="similarity">
    <text evidence="2">Belongs to the universal ribosomal protein uS5 family.</text>
</comment>
<organism>
    <name type="scientific">Shigella flexneri</name>
    <dbReference type="NCBI Taxonomy" id="623"/>
    <lineage>
        <taxon>Bacteria</taxon>
        <taxon>Pseudomonadati</taxon>
        <taxon>Pseudomonadota</taxon>
        <taxon>Gammaproteobacteria</taxon>
        <taxon>Enterobacterales</taxon>
        <taxon>Enterobacteriaceae</taxon>
        <taxon>Shigella</taxon>
    </lineage>
</organism>
<reference key="1">
    <citation type="journal article" date="2002" name="Nucleic Acids Res.">
        <title>Genome sequence of Shigella flexneri 2a: insights into pathogenicity through comparison with genomes of Escherichia coli K12 and O157.</title>
        <authorList>
            <person name="Jin Q."/>
            <person name="Yuan Z."/>
            <person name="Xu J."/>
            <person name="Wang Y."/>
            <person name="Shen Y."/>
            <person name="Lu W."/>
            <person name="Wang J."/>
            <person name="Liu H."/>
            <person name="Yang J."/>
            <person name="Yang F."/>
            <person name="Zhang X."/>
            <person name="Zhang J."/>
            <person name="Yang G."/>
            <person name="Wu H."/>
            <person name="Qu D."/>
            <person name="Dong J."/>
            <person name="Sun L."/>
            <person name="Xue Y."/>
            <person name="Zhao A."/>
            <person name="Gao Y."/>
            <person name="Zhu J."/>
            <person name="Kan B."/>
            <person name="Ding K."/>
            <person name="Chen S."/>
            <person name="Cheng H."/>
            <person name="Yao Z."/>
            <person name="He B."/>
            <person name="Chen R."/>
            <person name="Ma D."/>
            <person name="Qiang B."/>
            <person name="Wen Y."/>
            <person name="Hou Y."/>
            <person name="Yu J."/>
        </authorList>
    </citation>
    <scope>NUCLEOTIDE SEQUENCE [LARGE SCALE GENOMIC DNA]</scope>
    <source>
        <strain>301 / Serotype 2a</strain>
    </source>
</reference>
<reference key="2">
    <citation type="journal article" date="2003" name="Infect. Immun.">
        <title>Complete genome sequence and comparative genomics of Shigella flexneri serotype 2a strain 2457T.</title>
        <authorList>
            <person name="Wei J."/>
            <person name="Goldberg M.B."/>
            <person name="Burland V."/>
            <person name="Venkatesan M.M."/>
            <person name="Deng W."/>
            <person name="Fournier G."/>
            <person name="Mayhew G.F."/>
            <person name="Plunkett G. III"/>
            <person name="Rose D.J."/>
            <person name="Darling A."/>
            <person name="Mau B."/>
            <person name="Perna N.T."/>
            <person name="Payne S.M."/>
            <person name="Runyen-Janecky L.J."/>
            <person name="Zhou S."/>
            <person name="Schwartz D.C."/>
            <person name="Blattner F.R."/>
        </authorList>
    </citation>
    <scope>NUCLEOTIDE SEQUENCE [LARGE SCALE GENOMIC DNA]</scope>
    <source>
        <strain>ATCC 700930 / 2457T / Serotype 2a</strain>
    </source>
</reference>
<sequence length="167" mass="17603">MAHIEKQAGELQEKLIAVNRVSKTVKGGRIFSFTALTVVGDGNGRVGFGYGKAREVPAAIQKAMEKARRNMINVALNNGTLQHPVKGVHTGSRVFMQPASEGTGIIAGGAMRAVLEVAGVHNVLAKAYGSTNPINVVRATIDGLENMNSPEMVAAKRGKSVEEILGK</sequence>
<dbReference type="EMBL" id="AE005674">
    <property type="protein sequence ID" value="AAN44798.1"/>
    <property type="molecule type" value="Genomic_DNA"/>
</dbReference>
<dbReference type="EMBL" id="AE014073">
    <property type="protein sequence ID" value="AAP19378.1"/>
    <property type="molecule type" value="Genomic_DNA"/>
</dbReference>
<dbReference type="RefSeq" id="NP_709091.1">
    <property type="nucleotide sequence ID" value="NC_004337.2"/>
</dbReference>
<dbReference type="RefSeq" id="WP_000940121.1">
    <property type="nucleotide sequence ID" value="NZ_WPGW01000088.1"/>
</dbReference>
<dbReference type="SMR" id="P0A7W6"/>
<dbReference type="STRING" id="198214.SF3335"/>
<dbReference type="PaxDb" id="198214-SF3335"/>
<dbReference type="GeneID" id="1026986"/>
<dbReference type="GeneID" id="93778684"/>
<dbReference type="KEGG" id="sfl:SF3335"/>
<dbReference type="KEGG" id="sfx:S4427"/>
<dbReference type="PATRIC" id="fig|198214.7.peg.3944"/>
<dbReference type="HOGENOM" id="CLU_065898_2_2_6"/>
<dbReference type="Proteomes" id="UP000001006">
    <property type="component" value="Chromosome"/>
</dbReference>
<dbReference type="Proteomes" id="UP000002673">
    <property type="component" value="Chromosome"/>
</dbReference>
<dbReference type="GO" id="GO:0015935">
    <property type="term" value="C:small ribosomal subunit"/>
    <property type="evidence" value="ECO:0007669"/>
    <property type="project" value="InterPro"/>
</dbReference>
<dbReference type="GO" id="GO:0019843">
    <property type="term" value="F:rRNA binding"/>
    <property type="evidence" value="ECO:0007669"/>
    <property type="project" value="UniProtKB-UniRule"/>
</dbReference>
<dbReference type="GO" id="GO:0003735">
    <property type="term" value="F:structural constituent of ribosome"/>
    <property type="evidence" value="ECO:0007669"/>
    <property type="project" value="InterPro"/>
</dbReference>
<dbReference type="GO" id="GO:0006412">
    <property type="term" value="P:translation"/>
    <property type="evidence" value="ECO:0007669"/>
    <property type="project" value="UniProtKB-UniRule"/>
</dbReference>
<dbReference type="FunFam" id="3.30.160.20:FF:000001">
    <property type="entry name" value="30S ribosomal protein S5"/>
    <property type="match status" value="1"/>
</dbReference>
<dbReference type="FunFam" id="3.30.230.10:FF:000002">
    <property type="entry name" value="30S ribosomal protein S5"/>
    <property type="match status" value="1"/>
</dbReference>
<dbReference type="Gene3D" id="3.30.160.20">
    <property type="match status" value="1"/>
</dbReference>
<dbReference type="Gene3D" id="3.30.230.10">
    <property type="match status" value="1"/>
</dbReference>
<dbReference type="HAMAP" id="MF_01307_B">
    <property type="entry name" value="Ribosomal_uS5_B"/>
    <property type="match status" value="1"/>
</dbReference>
<dbReference type="InterPro" id="IPR020568">
    <property type="entry name" value="Ribosomal_Su5_D2-typ_SF"/>
</dbReference>
<dbReference type="InterPro" id="IPR000851">
    <property type="entry name" value="Ribosomal_uS5"/>
</dbReference>
<dbReference type="InterPro" id="IPR005712">
    <property type="entry name" value="Ribosomal_uS5_bac-type"/>
</dbReference>
<dbReference type="InterPro" id="IPR005324">
    <property type="entry name" value="Ribosomal_uS5_C"/>
</dbReference>
<dbReference type="InterPro" id="IPR013810">
    <property type="entry name" value="Ribosomal_uS5_N"/>
</dbReference>
<dbReference type="InterPro" id="IPR018192">
    <property type="entry name" value="Ribosomal_uS5_N_CS"/>
</dbReference>
<dbReference type="InterPro" id="IPR014721">
    <property type="entry name" value="Ribsml_uS5_D2-typ_fold_subgr"/>
</dbReference>
<dbReference type="NCBIfam" id="TIGR01021">
    <property type="entry name" value="rpsE_bact"/>
    <property type="match status" value="1"/>
</dbReference>
<dbReference type="PANTHER" id="PTHR48277">
    <property type="entry name" value="MITOCHONDRIAL RIBOSOMAL PROTEIN S5"/>
    <property type="match status" value="1"/>
</dbReference>
<dbReference type="PANTHER" id="PTHR48277:SF1">
    <property type="entry name" value="MITOCHONDRIAL RIBOSOMAL PROTEIN S5"/>
    <property type="match status" value="1"/>
</dbReference>
<dbReference type="Pfam" id="PF00333">
    <property type="entry name" value="Ribosomal_S5"/>
    <property type="match status" value="1"/>
</dbReference>
<dbReference type="Pfam" id="PF03719">
    <property type="entry name" value="Ribosomal_S5_C"/>
    <property type="match status" value="1"/>
</dbReference>
<dbReference type="SUPFAM" id="SSF54768">
    <property type="entry name" value="dsRNA-binding domain-like"/>
    <property type="match status" value="1"/>
</dbReference>
<dbReference type="SUPFAM" id="SSF54211">
    <property type="entry name" value="Ribosomal protein S5 domain 2-like"/>
    <property type="match status" value="1"/>
</dbReference>
<dbReference type="PROSITE" id="PS00585">
    <property type="entry name" value="RIBOSOMAL_S5"/>
    <property type="match status" value="1"/>
</dbReference>
<dbReference type="PROSITE" id="PS50881">
    <property type="entry name" value="S5_DSRBD"/>
    <property type="match status" value="1"/>
</dbReference>
<keyword id="KW-0007">Acetylation</keyword>
<keyword id="KW-1185">Reference proteome</keyword>
<keyword id="KW-0687">Ribonucleoprotein</keyword>
<keyword id="KW-0689">Ribosomal protein</keyword>
<keyword id="KW-0694">RNA-binding</keyword>
<keyword id="KW-0699">rRNA-binding</keyword>
<proteinExistence type="inferred from homology"/>
<evidence type="ECO:0000250" key="1"/>
<evidence type="ECO:0000305" key="2"/>
<accession>P0A7W6</accession>
<accession>O54299</accession>
<accession>P02356</accession>
<gene>
    <name type="primary">rpsE</name>
    <name type="ordered locus">SF3335</name>
    <name type="ordered locus">S4427</name>
</gene>
<name>RS5_SHIFL</name>
<feature type="initiator methionine" description="Removed" evidence="1">
    <location>
        <position position="1"/>
    </location>
</feature>
<feature type="chain" id="PRO_0000131591" description="Small ribosomal subunit protein uS5">
    <location>
        <begin position="2"/>
        <end position="167"/>
    </location>
</feature>
<feature type="domain" description="S5 DRBM">
    <location>
        <begin position="11"/>
        <end position="74"/>
    </location>
</feature>
<feature type="modified residue" description="N-acetylalanine" evidence="1">
    <location>
        <position position="2"/>
    </location>
</feature>